<accession>A7FK36</accession>
<name>Y2649_YERP3</name>
<comment type="subcellular location">
    <subcellularLocation>
        <location evidence="1">Cell membrane</location>
        <topology evidence="1">Multi-pass membrane protein</topology>
    </subcellularLocation>
</comment>
<comment type="similarity">
    <text evidence="1">Belongs to the AAE transporter (TC 2.A.81) family. YbjL subfamily.</text>
</comment>
<gene>
    <name type="ordered locus">YpsIP31758_2649</name>
</gene>
<organism>
    <name type="scientific">Yersinia pseudotuberculosis serotype O:1b (strain IP 31758)</name>
    <dbReference type="NCBI Taxonomy" id="349747"/>
    <lineage>
        <taxon>Bacteria</taxon>
        <taxon>Pseudomonadati</taxon>
        <taxon>Pseudomonadota</taxon>
        <taxon>Gammaproteobacteria</taxon>
        <taxon>Enterobacterales</taxon>
        <taxon>Yersiniaceae</taxon>
        <taxon>Yersinia</taxon>
    </lineage>
</organism>
<feature type="chain" id="PRO_0000329155" description="Putative transport protein YpsIP31758_2649">
    <location>
        <begin position="1"/>
        <end position="562"/>
    </location>
</feature>
<feature type="transmembrane region" description="Helical" evidence="1">
    <location>
        <begin position="8"/>
        <end position="28"/>
    </location>
</feature>
<feature type="transmembrane region" description="Helical" evidence="1">
    <location>
        <begin position="37"/>
        <end position="57"/>
    </location>
</feature>
<feature type="transmembrane region" description="Helical" evidence="1">
    <location>
        <begin position="66"/>
        <end position="86"/>
    </location>
</feature>
<feature type="transmembrane region" description="Helical" evidence="1">
    <location>
        <begin position="94"/>
        <end position="114"/>
    </location>
</feature>
<feature type="transmembrane region" description="Helical" evidence="1">
    <location>
        <begin position="118"/>
        <end position="138"/>
    </location>
</feature>
<feature type="transmembrane region" description="Helical" evidence="1">
    <location>
        <begin position="158"/>
        <end position="178"/>
    </location>
</feature>
<feature type="transmembrane region" description="Helical" evidence="1">
    <location>
        <begin position="383"/>
        <end position="403"/>
    </location>
</feature>
<feature type="transmembrane region" description="Helical" evidence="1">
    <location>
        <begin position="406"/>
        <end position="426"/>
    </location>
</feature>
<feature type="transmembrane region" description="Helical" evidence="1">
    <location>
        <begin position="447"/>
        <end position="467"/>
    </location>
</feature>
<feature type="transmembrane region" description="Helical" evidence="1">
    <location>
        <begin position="475"/>
        <end position="495"/>
    </location>
</feature>
<feature type="transmembrane region" description="Helical" evidence="1">
    <location>
        <begin position="541"/>
        <end position="561"/>
    </location>
</feature>
<feature type="domain" description="RCK C-terminal 1" evidence="1">
    <location>
        <begin position="202"/>
        <end position="288"/>
    </location>
</feature>
<feature type="domain" description="RCK C-terminal 2" evidence="1">
    <location>
        <begin position="290"/>
        <end position="373"/>
    </location>
</feature>
<sequence>MNINVANLLNGNYILLLFVVLALGLCLGKLRLGSIQLGNAIGVLVVSLLLGQQHFAINTEALNLGFMLFIFCVGVEAGPNFFSIFFRDGKNYLMLALVMVGSAMILALGLGKLFGWDIGLTAGMLAGSMTSTPVLVGAGDTLRHTMANGSSLQQAQDNLSLGYALTYLIGLVSLILGARYLPKLQHQDLPTSAQQIARERGLDTDSQRKVYLPVIRAYRVGPELVAWADGKNLRELGIYRQTGCYIERIRRNGILANPDGDAVLQVGDEISLVGYPDAHSRLDPSFRNGKEVFDRDLLDMRIVTEEIVVKNSNAVGKRLSHLKLTDHGCFLNRVIRSQIEMPIDDNVVLNKGDVLQVSGDARRVKSVAEKIGFISIHSQVTDLLAFCSFFILGLMIGLITFQFSNFSFGIGNAAGLLLAGIMLGFLRANHPTFGYIPQGALNMVKEFGLMVFMAGVGLSAGGGINSSLGAVGGQMLISGLIVSLVPVVICFVFGAYVLRMNRALLFGAIMGARTCAPAMDIISDTARSNIPALGYAGTYAIANVLLTLAGSLIVILWPGILG</sequence>
<keyword id="KW-1003">Cell membrane</keyword>
<keyword id="KW-0472">Membrane</keyword>
<keyword id="KW-0677">Repeat</keyword>
<keyword id="KW-0812">Transmembrane</keyword>
<keyword id="KW-1133">Transmembrane helix</keyword>
<keyword id="KW-0813">Transport</keyword>
<reference key="1">
    <citation type="journal article" date="2007" name="PLoS Genet.">
        <title>The complete genome sequence of Yersinia pseudotuberculosis IP31758, the causative agent of Far East scarlet-like fever.</title>
        <authorList>
            <person name="Eppinger M."/>
            <person name="Rosovitz M.J."/>
            <person name="Fricke W.F."/>
            <person name="Rasko D.A."/>
            <person name="Kokorina G."/>
            <person name="Fayolle C."/>
            <person name="Lindler L.E."/>
            <person name="Carniel E."/>
            <person name="Ravel J."/>
        </authorList>
    </citation>
    <scope>NUCLEOTIDE SEQUENCE [LARGE SCALE GENOMIC DNA]</scope>
    <source>
        <strain>IP 31758</strain>
    </source>
</reference>
<evidence type="ECO:0000255" key="1">
    <source>
        <dbReference type="HAMAP-Rule" id="MF_01015"/>
    </source>
</evidence>
<proteinExistence type="inferred from homology"/>
<dbReference type="EMBL" id="CP000720">
    <property type="protein sequence ID" value="ABS47457.1"/>
    <property type="molecule type" value="Genomic_DNA"/>
</dbReference>
<dbReference type="RefSeq" id="WP_002208766.1">
    <property type="nucleotide sequence ID" value="NC_009708.1"/>
</dbReference>
<dbReference type="SMR" id="A7FK36"/>
<dbReference type="KEGG" id="ypi:YpsIP31758_2649"/>
<dbReference type="HOGENOM" id="CLU_035023_2_2_6"/>
<dbReference type="Proteomes" id="UP000002412">
    <property type="component" value="Chromosome"/>
</dbReference>
<dbReference type="GO" id="GO:0005886">
    <property type="term" value="C:plasma membrane"/>
    <property type="evidence" value="ECO:0007669"/>
    <property type="project" value="UniProtKB-SubCell"/>
</dbReference>
<dbReference type="GO" id="GO:0008324">
    <property type="term" value="F:monoatomic cation transmembrane transporter activity"/>
    <property type="evidence" value="ECO:0007669"/>
    <property type="project" value="InterPro"/>
</dbReference>
<dbReference type="GO" id="GO:0006813">
    <property type="term" value="P:potassium ion transport"/>
    <property type="evidence" value="ECO:0007669"/>
    <property type="project" value="InterPro"/>
</dbReference>
<dbReference type="FunFam" id="3.30.70.1450:FF:000003">
    <property type="entry name" value="Putative transport protein YbjL"/>
    <property type="match status" value="1"/>
</dbReference>
<dbReference type="Gene3D" id="3.30.70.1450">
    <property type="entry name" value="Regulator of K+ conductance, C-terminal domain"/>
    <property type="match status" value="2"/>
</dbReference>
<dbReference type="HAMAP" id="MF_01015">
    <property type="entry name" value="YbjL"/>
    <property type="match status" value="1"/>
</dbReference>
<dbReference type="InterPro" id="IPR050144">
    <property type="entry name" value="AAE_transporter"/>
</dbReference>
<dbReference type="InterPro" id="IPR006037">
    <property type="entry name" value="RCK_C"/>
</dbReference>
<dbReference type="InterPro" id="IPR036721">
    <property type="entry name" value="RCK_C_sf"/>
</dbReference>
<dbReference type="InterPro" id="IPR023017">
    <property type="entry name" value="Transp_YbjL_put"/>
</dbReference>
<dbReference type="InterPro" id="IPR006512">
    <property type="entry name" value="YidE_YbjL"/>
</dbReference>
<dbReference type="NCBIfam" id="NF003440">
    <property type="entry name" value="PRK04972.1"/>
    <property type="match status" value="1"/>
</dbReference>
<dbReference type="NCBIfam" id="TIGR01625">
    <property type="entry name" value="YidE_YbjL_dupl"/>
    <property type="match status" value="2"/>
</dbReference>
<dbReference type="PANTHER" id="PTHR30445">
    <property type="entry name" value="K(+)_H(+) ANTIPORTER SUBUNIT KHTT"/>
    <property type="match status" value="1"/>
</dbReference>
<dbReference type="PANTHER" id="PTHR30445:SF10">
    <property type="entry name" value="TRANSPORT PROTEIN YBJL-RELATED"/>
    <property type="match status" value="1"/>
</dbReference>
<dbReference type="Pfam" id="PF06826">
    <property type="entry name" value="Asp-Al_Ex"/>
    <property type="match status" value="2"/>
</dbReference>
<dbReference type="Pfam" id="PF02080">
    <property type="entry name" value="TrkA_C"/>
    <property type="match status" value="2"/>
</dbReference>
<dbReference type="SUPFAM" id="SSF116726">
    <property type="entry name" value="TrkA C-terminal domain-like"/>
    <property type="match status" value="2"/>
</dbReference>
<dbReference type="PROSITE" id="PS51202">
    <property type="entry name" value="RCK_C"/>
    <property type="match status" value="2"/>
</dbReference>
<protein>
    <recommendedName>
        <fullName evidence="1">Putative transport protein YpsIP31758_2649</fullName>
    </recommendedName>
</protein>